<proteinExistence type="predicted"/>
<organismHost>
    <name type="scientific">Thermoproteus tenax</name>
    <dbReference type="NCBI Taxonomy" id="2271"/>
</organismHost>
<feature type="chain" id="PRO_0000222958" description="Uncharacterized 7.9 kDa protein">
    <location>
        <begin position="1"/>
        <end position="65"/>
    </location>
</feature>
<dbReference type="EMBL" id="X14855">
    <property type="protein sequence ID" value="CAA32969.1"/>
    <property type="molecule type" value="Genomic_DNA"/>
</dbReference>
<dbReference type="SMR" id="P19276"/>
<dbReference type="Proteomes" id="UP000009250">
    <property type="component" value="Genome"/>
</dbReference>
<protein>
    <recommendedName>
        <fullName>Uncharacterized 7.9 kDa protein</fullName>
    </recommendedName>
</protein>
<keyword id="KW-1185">Reference proteome</keyword>
<accession>P19276</accession>
<reference key="1">
    <citation type="submission" date="1989-03" db="EMBL/GenBank/DDBJ databases">
        <authorList>
            <person name="Neumann H."/>
        </authorList>
    </citation>
    <scope>NUCLEOTIDE SEQUENCE [GENOMIC DNA]</scope>
</reference>
<name>YOR1_TTV1K</name>
<organism>
    <name type="scientific">Thermoproteus tenax virus 1 (strain KRA1)</name>
    <name type="common">TTV1</name>
    <dbReference type="NCBI Taxonomy" id="10480"/>
    <lineage>
        <taxon>Viruses</taxon>
        <taxon>Adnaviria</taxon>
        <taxon>Zilligvirae</taxon>
        <taxon>Taleaviricota</taxon>
        <taxon>Tokiviricetes</taxon>
        <taxon>Primavirales</taxon>
        <taxon>Tristromaviridae</taxon>
        <taxon>Betatristromavirus</taxon>
        <taxon>Betatristromavirus TTV1</taxon>
    </lineage>
</organism>
<sequence length="65" mass="7901">MVDFPDIEVESIPEEIMEEVGEYIDIFIQLTEIAEMERDVIVEEQLKDEAKQFEEYEDFWFDVYT</sequence>